<name>GUN19_ARATH</name>
<protein>
    <recommendedName>
        <fullName>Endoglucanase 19</fullName>
        <ecNumber>3.2.1.4</ecNumber>
    </recommendedName>
    <alternativeName>
        <fullName>Endo-1,4-beta glucanase 19</fullName>
    </alternativeName>
</protein>
<organism>
    <name type="scientific">Arabidopsis thaliana</name>
    <name type="common">Mouse-ear cress</name>
    <dbReference type="NCBI Taxonomy" id="3702"/>
    <lineage>
        <taxon>Eukaryota</taxon>
        <taxon>Viridiplantae</taxon>
        <taxon>Streptophyta</taxon>
        <taxon>Embryophyta</taxon>
        <taxon>Tracheophyta</taxon>
        <taxon>Spermatophyta</taxon>
        <taxon>Magnoliopsida</taxon>
        <taxon>eudicotyledons</taxon>
        <taxon>Gunneridae</taxon>
        <taxon>Pentapetalae</taxon>
        <taxon>rosids</taxon>
        <taxon>malvids</taxon>
        <taxon>Brassicales</taxon>
        <taxon>Brassicaceae</taxon>
        <taxon>Camelineae</taxon>
        <taxon>Arabidopsis</taxon>
    </lineage>
</organism>
<reference key="1">
    <citation type="journal article" date="1999" name="Nature">
        <title>Sequence and analysis of chromosome 4 of the plant Arabidopsis thaliana.</title>
        <authorList>
            <person name="Mayer K.F.X."/>
            <person name="Schueller C."/>
            <person name="Wambutt R."/>
            <person name="Murphy G."/>
            <person name="Volckaert G."/>
            <person name="Pohl T."/>
            <person name="Duesterhoeft A."/>
            <person name="Stiekema W."/>
            <person name="Entian K.-D."/>
            <person name="Terryn N."/>
            <person name="Harris B."/>
            <person name="Ansorge W."/>
            <person name="Brandt P."/>
            <person name="Grivell L.A."/>
            <person name="Rieger M."/>
            <person name="Weichselgartner M."/>
            <person name="de Simone V."/>
            <person name="Obermaier B."/>
            <person name="Mache R."/>
            <person name="Mueller M."/>
            <person name="Kreis M."/>
            <person name="Delseny M."/>
            <person name="Puigdomenech P."/>
            <person name="Watson M."/>
            <person name="Schmidtheini T."/>
            <person name="Reichert B."/>
            <person name="Portetelle D."/>
            <person name="Perez-Alonso M."/>
            <person name="Boutry M."/>
            <person name="Bancroft I."/>
            <person name="Vos P."/>
            <person name="Hoheisel J."/>
            <person name="Zimmermann W."/>
            <person name="Wedler H."/>
            <person name="Ridley P."/>
            <person name="Langham S.-A."/>
            <person name="McCullagh B."/>
            <person name="Bilham L."/>
            <person name="Robben J."/>
            <person name="van der Schueren J."/>
            <person name="Grymonprez B."/>
            <person name="Chuang Y.-J."/>
            <person name="Vandenbussche F."/>
            <person name="Braeken M."/>
            <person name="Weltjens I."/>
            <person name="Voet M."/>
            <person name="Bastiaens I."/>
            <person name="Aert R."/>
            <person name="Defoor E."/>
            <person name="Weitzenegger T."/>
            <person name="Bothe G."/>
            <person name="Ramsperger U."/>
            <person name="Hilbert H."/>
            <person name="Braun M."/>
            <person name="Holzer E."/>
            <person name="Brandt A."/>
            <person name="Peters S."/>
            <person name="van Staveren M."/>
            <person name="Dirkse W."/>
            <person name="Mooijman P."/>
            <person name="Klein Lankhorst R."/>
            <person name="Rose M."/>
            <person name="Hauf J."/>
            <person name="Koetter P."/>
            <person name="Berneiser S."/>
            <person name="Hempel S."/>
            <person name="Feldpausch M."/>
            <person name="Lamberth S."/>
            <person name="Van den Daele H."/>
            <person name="De Keyser A."/>
            <person name="Buysshaert C."/>
            <person name="Gielen J."/>
            <person name="Villarroel R."/>
            <person name="De Clercq R."/>
            <person name="van Montagu M."/>
            <person name="Rogers J."/>
            <person name="Cronin A."/>
            <person name="Quail M.A."/>
            <person name="Bray-Allen S."/>
            <person name="Clark L."/>
            <person name="Doggett J."/>
            <person name="Hall S."/>
            <person name="Kay M."/>
            <person name="Lennard N."/>
            <person name="McLay K."/>
            <person name="Mayes R."/>
            <person name="Pettett A."/>
            <person name="Rajandream M.A."/>
            <person name="Lyne M."/>
            <person name="Benes V."/>
            <person name="Rechmann S."/>
            <person name="Borkova D."/>
            <person name="Bloecker H."/>
            <person name="Scharfe M."/>
            <person name="Grimm M."/>
            <person name="Loehnert T.-H."/>
            <person name="Dose S."/>
            <person name="de Haan M."/>
            <person name="Maarse A.C."/>
            <person name="Schaefer M."/>
            <person name="Mueller-Auer S."/>
            <person name="Gabel C."/>
            <person name="Fuchs M."/>
            <person name="Fartmann B."/>
            <person name="Granderath K."/>
            <person name="Dauner D."/>
            <person name="Herzl A."/>
            <person name="Neumann S."/>
            <person name="Argiriou A."/>
            <person name="Vitale D."/>
            <person name="Liguori R."/>
            <person name="Piravandi E."/>
            <person name="Massenet O."/>
            <person name="Quigley F."/>
            <person name="Clabauld G."/>
            <person name="Muendlein A."/>
            <person name="Felber R."/>
            <person name="Schnabl S."/>
            <person name="Hiller R."/>
            <person name="Schmidt W."/>
            <person name="Lecharny A."/>
            <person name="Aubourg S."/>
            <person name="Chefdor F."/>
            <person name="Cooke R."/>
            <person name="Berger C."/>
            <person name="Monfort A."/>
            <person name="Casacuberta E."/>
            <person name="Gibbons T."/>
            <person name="Weber N."/>
            <person name="Vandenbol M."/>
            <person name="Bargues M."/>
            <person name="Terol J."/>
            <person name="Torres A."/>
            <person name="Perez-Perez A."/>
            <person name="Purnelle B."/>
            <person name="Bent E."/>
            <person name="Johnson S."/>
            <person name="Tacon D."/>
            <person name="Jesse T."/>
            <person name="Heijnen L."/>
            <person name="Schwarz S."/>
            <person name="Scholler P."/>
            <person name="Heber S."/>
            <person name="Francs P."/>
            <person name="Bielke C."/>
            <person name="Frishman D."/>
            <person name="Haase D."/>
            <person name="Lemcke K."/>
            <person name="Mewes H.-W."/>
            <person name="Stocker S."/>
            <person name="Zaccaria P."/>
            <person name="Bevan M."/>
            <person name="Wilson R.K."/>
            <person name="de la Bastide M."/>
            <person name="Habermann K."/>
            <person name="Parnell L."/>
            <person name="Dedhia N."/>
            <person name="Gnoj L."/>
            <person name="Schutz K."/>
            <person name="Huang E."/>
            <person name="Spiegel L."/>
            <person name="Sekhon M."/>
            <person name="Murray J."/>
            <person name="Sheet P."/>
            <person name="Cordes M."/>
            <person name="Abu-Threideh J."/>
            <person name="Stoneking T."/>
            <person name="Kalicki J."/>
            <person name="Graves T."/>
            <person name="Harmon G."/>
            <person name="Edwards J."/>
            <person name="Latreille P."/>
            <person name="Courtney L."/>
            <person name="Cloud J."/>
            <person name="Abbott A."/>
            <person name="Scott K."/>
            <person name="Johnson D."/>
            <person name="Minx P."/>
            <person name="Bentley D."/>
            <person name="Fulton B."/>
            <person name="Miller N."/>
            <person name="Greco T."/>
            <person name="Kemp K."/>
            <person name="Kramer J."/>
            <person name="Fulton L."/>
            <person name="Mardis E."/>
            <person name="Dante M."/>
            <person name="Pepin K."/>
            <person name="Hillier L.W."/>
            <person name="Nelson J."/>
            <person name="Spieth J."/>
            <person name="Ryan E."/>
            <person name="Andrews S."/>
            <person name="Geisel C."/>
            <person name="Layman D."/>
            <person name="Du H."/>
            <person name="Ali J."/>
            <person name="Berghoff A."/>
            <person name="Jones K."/>
            <person name="Drone K."/>
            <person name="Cotton M."/>
            <person name="Joshu C."/>
            <person name="Antonoiu B."/>
            <person name="Zidanic M."/>
            <person name="Strong C."/>
            <person name="Sun H."/>
            <person name="Lamar B."/>
            <person name="Yordan C."/>
            <person name="Ma P."/>
            <person name="Zhong J."/>
            <person name="Preston R."/>
            <person name="Vil D."/>
            <person name="Shekher M."/>
            <person name="Matero A."/>
            <person name="Shah R."/>
            <person name="Swaby I.K."/>
            <person name="O'Shaughnessy A."/>
            <person name="Rodriguez M."/>
            <person name="Hoffman J."/>
            <person name="Till S."/>
            <person name="Granat S."/>
            <person name="Shohdy N."/>
            <person name="Hasegawa A."/>
            <person name="Hameed A."/>
            <person name="Lodhi M."/>
            <person name="Johnson A."/>
            <person name="Chen E."/>
            <person name="Marra M.A."/>
            <person name="Martienssen R."/>
            <person name="McCombie W.R."/>
        </authorList>
    </citation>
    <scope>NUCLEOTIDE SEQUENCE [LARGE SCALE GENOMIC DNA]</scope>
    <source>
        <strain>cv. Columbia</strain>
    </source>
</reference>
<reference key="2">
    <citation type="journal article" date="2017" name="Plant J.">
        <title>Araport11: a complete reannotation of the Arabidopsis thaliana reference genome.</title>
        <authorList>
            <person name="Cheng C.Y."/>
            <person name="Krishnakumar V."/>
            <person name="Chan A.P."/>
            <person name="Thibaud-Nissen F."/>
            <person name="Schobel S."/>
            <person name="Town C.D."/>
        </authorList>
    </citation>
    <scope>GENOME REANNOTATION</scope>
    <source>
        <strain>cv. Columbia</strain>
    </source>
</reference>
<reference key="3">
    <citation type="journal article" date="2003" name="Science">
        <title>Empirical analysis of transcriptional activity in the Arabidopsis genome.</title>
        <authorList>
            <person name="Yamada K."/>
            <person name="Lim J."/>
            <person name="Dale J.M."/>
            <person name="Chen H."/>
            <person name="Shinn P."/>
            <person name="Palm C.J."/>
            <person name="Southwick A.M."/>
            <person name="Wu H.C."/>
            <person name="Kim C.J."/>
            <person name="Nguyen M."/>
            <person name="Pham P.K."/>
            <person name="Cheuk R.F."/>
            <person name="Karlin-Newmann G."/>
            <person name="Liu S.X."/>
            <person name="Lam B."/>
            <person name="Sakano H."/>
            <person name="Wu T."/>
            <person name="Yu G."/>
            <person name="Miranda M."/>
            <person name="Quach H.L."/>
            <person name="Tripp M."/>
            <person name="Chang C.H."/>
            <person name="Lee J.M."/>
            <person name="Toriumi M.J."/>
            <person name="Chan M.M."/>
            <person name="Tang C.C."/>
            <person name="Onodera C.S."/>
            <person name="Deng J.M."/>
            <person name="Akiyama K."/>
            <person name="Ansari Y."/>
            <person name="Arakawa T."/>
            <person name="Banh J."/>
            <person name="Banno F."/>
            <person name="Bowser L."/>
            <person name="Brooks S.Y."/>
            <person name="Carninci P."/>
            <person name="Chao Q."/>
            <person name="Choy N."/>
            <person name="Enju A."/>
            <person name="Goldsmith A.D."/>
            <person name="Gurjal M."/>
            <person name="Hansen N.F."/>
            <person name="Hayashizaki Y."/>
            <person name="Johnson-Hopson C."/>
            <person name="Hsuan V.W."/>
            <person name="Iida K."/>
            <person name="Karnes M."/>
            <person name="Khan S."/>
            <person name="Koesema E."/>
            <person name="Ishida J."/>
            <person name="Jiang P.X."/>
            <person name="Jones T."/>
            <person name="Kawai J."/>
            <person name="Kamiya A."/>
            <person name="Meyers C."/>
            <person name="Nakajima M."/>
            <person name="Narusaka M."/>
            <person name="Seki M."/>
            <person name="Sakurai T."/>
            <person name="Satou M."/>
            <person name="Tamse R."/>
            <person name="Vaysberg M."/>
            <person name="Wallender E.K."/>
            <person name="Wong C."/>
            <person name="Yamamura Y."/>
            <person name="Yuan S."/>
            <person name="Shinozaki K."/>
            <person name="Davis R.W."/>
            <person name="Theologis A."/>
            <person name="Ecker J.R."/>
        </authorList>
    </citation>
    <scope>NUCLEOTIDE SEQUENCE [LARGE SCALE MRNA]</scope>
    <source>
        <strain>cv. Columbia</strain>
    </source>
</reference>
<reference key="4">
    <citation type="journal article" date="2004" name="J. Mol. Evol.">
        <title>Phylogenetic analysis of the plant endo-beta-1,4-glucanase gene family.</title>
        <authorList>
            <person name="Libertini E."/>
            <person name="Li Y."/>
            <person name="McQueen-Mason S.J."/>
        </authorList>
    </citation>
    <scope>GENE FAMILY</scope>
</reference>
<keyword id="KW-0119">Carbohydrate metabolism</keyword>
<keyword id="KW-0961">Cell wall biogenesis/degradation</keyword>
<keyword id="KW-0136">Cellulose degradation</keyword>
<keyword id="KW-0325">Glycoprotein</keyword>
<keyword id="KW-0326">Glycosidase</keyword>
<keyword id="KW-0378">Hydrolase</keyword>
<keyword id="KW-0624">Polysaccharide degradation</keyword>
<keyword id="KW-1185">Reference proteome</keyword>
<keyword id="KW-0964">Secreted</keyword>
<keyword id="KW-0732">Signal</keyword>
<proteinExistence type="evidence at transcript level"/>
<gene>
    <name type="ordered locus">At4g11050</name>
    <name type="ORF">F2P3.1</name>
    <name type="ORF">T22B4.30</name>
</gene>
<accession>Q8L7I0</accession>
<accession>O82513</accession>
<evidence type="ECO:0000250" key="1"/>
<evidence type="ECO:0000255" key="2"/>
<evidence type="ECO:0000255" key="3">
    <source>
        <dbReference type="PROSITE-ProRule" id="PRU10059"/>
    </source>
</evidence>
<evidence type="ECO:0000255" key="4">
    <source>
        <dbReference type="PROSITE-ProRule" id="PRU10060"/>
    </source>
</evidence>
<evidence type="ECO:0000255" key="5">
    <source>
        <dbReference type="PROSITE-ProRule" id="PRU10140"/>
    </source>
</evidence>
<evidence type="ECO:0000256" key="6">
    <source>
        <dbReference type="SAM" id="MobiDB-lite"/>
    </source>
</evidence>
<evidence type="ECO:0000305" key="7"/>
<sequence>MGSRTTISILVVLLLGLVQLAISGHDYKQALSKSILFFEAQRSGHLPPNQRVSWRSHSGLYDGKSSGVDLVGGYYDAGDNVKFGLPMAFTVTTMCWSIIEYGGQLESNGELGHAIDAVKWGTDYFIKAHPEPNVLYGEVGDGKSDHYCWQRPEEMTTDRRAYKIDRNNPGSDLAGETAAAMAAASIVFRRSDPSYSAELLRHAHQLFEFADKYRGKYDSSITVAQKYYRSVSGYNDELLWAAAWLYQATNDKYYLDYLGKNGDSMGGTGWSMTEFGWDVKYAGVQTLVAKVLMQGKGGEHTAVFERYQQKAEQFMCSLLGKSTKNIKKTPGGLIFRQSWNNMQFVTSASFLATVYSDYLSYSKRDLLCSQGNISPSQLLEFSKSQVDYILGDNPRATSYMVGYGENYPRQVHHRGSSIVSFNVDQKFVTCRGGYATWFSRKGSDPNVLTGALVGGPDAYDNFADQRDNYEQTEPATYNNAPLLGVLARLISGSTGFDQLLPGVSPTPSPVIIKPAPVPQRKPTKPPAASSPSPITISQKMTNSWKNEGKVYYRYSTILTNRSTKTLKILKISITKLYGPIWGVTKTGNSFSFPSWMQSLPSGKSMEFVYIHSASPADVLVSNYSLE</sequence>
<feature type="signal peptide" evidence="2">
    <location>
        <begin position="1"/>
        <end position="23"/>
    </location>
</feature>
<feature type="chain" id="PRO_0000249271" description="Endoglucanase 19">
    <location>
        <begin position="24"/>
        <end position="626"/>
    </location>
</feature>
<feature type="region of interest" description="Disordered" evidence="6">
    <location>
        <begin position="515"/>
        <end position="536"/>
    </location>
</feature>
<feature type="compositionally biased region" description="Low complexity" evidence="6">
    <location>
        <begin position="526"/>
        <end position="536"/>
    </location>
</feature>
<feature type="active site" description="Nucleophile" evidence="5">
    <location>
        <position position="79"/>
    </location>
</feature>
<feature type="active site" evidence="3">
    <location>
        <position position="412"/>
    </location>
</feature>
<feature type="active site" evidence="4">
    <location>
        <position position="464"/>
    </location>
</feature>
<feature type="active site" evidence="4">
    <location>
        <position position="473"/>
    </location>
</feature>
<feature type="glycosylation site" description="N-linked (GlcNAc...) asparagine" evidence="2">
    <location>
        <position position="560"/>
    </location>
</feature>
<feature type="glycosylation site" description="N-linked (GlcNAc...) asparagine" evidence="2">
    <location>
        <position position="622"/>
    </location>
</feature>
<comment type="catalytic activity">
    <reaction>
        <text>Endohydrolysis of (1-&gt;4)-beta-D-glucosidic linkages in cellulose, lichenin and cereal beta-D-glucans.</text>
        <dbReference type="EC" id="3.2.1.4"/>
    </reaction>
</comment>
<comment type="subcellular location">
    <subcellularLocation>
        <location evidence="1">Secreted</location>
    </subcellularLocation>
</comment>
<comment type="similarity">
    <text evidence="5 7">Belongs to the glycosyl hydrolase 9 (cellulase E) family.</text>
</comment>
<comment type="sequence caution" evidence="7">
    <conflict type="erroneous gene model prediction">
        <sequence resource="EMBL-CDS" id="AAC35539"/>
    </conflict>
</comment>
<comment type="sequence caution" evidence="7">
    <conflict type="erroneous gene model prediction">
        <sequence resource="EMBL-CDS" id="CAB43040"/>
    </conflict>
</comment>
<comment type="sequence caution" evidence="7">
    <conflict type="erroneous gene model prediction">
        <sequence resource="EMBL-CDS" id="CAB81206"/>
    </conflict>
</comment>
<dbReference type="EC" id="3.2.1.4"/>
<dbReference type="EMBL" id="AF080120">
    <property type="protein sequence ID" value="AAC35539.1"/>
    <property type="status" value="ALT_SEQ"/>
    <property type="molecule type" value="Genomic_DNA"/>
</dbReference>
<dbReference type="EMBL" id="AL049876">
    <property type="protein sequence ID" value="CAB43040.1"/>
    <property type="status" value="ALT_SEQ"/>
    <property type="molecule type" value="Genomic_DNA"/>
</dbReference>
<dbReference type="EMBL" id="AL161518">
    <property type="protein sequence ID" value="CAB81206.1"/>
    <property type="status" value="ALT_SEQ"/>
    <property type="molecule type" value="Genomic_DNA"/>
</dbReference>
<dbReference type="EMBL" id="CP002687">
    <property type="protein sequence ID" value="AEE82966.1"/>
    <property type="molecule type" value="Genomic_DNA"/>
</dbReference>
<dbReference type="EMBL" id="AY133685">
    <property type="protein sequence ID" value="AAM91619.1"/>
    <property type="molecule type" value="mRNA"/>
</dbReference>
<dbReference type="PIR" id="T01929">
    <property type="entry name" value="T01929"/>
</dbReference>
<dbReference type="SMR" id="Q8L7I0"/>
<dbReference type="FunCoup" id="Q8L7I0">
    <property type="interactions" value="170"/>
</dbReference>
<dbReference type="STRING" id="3702.Q8L7I0"/>
<dbReference type="CAZy" id="CBM49">
    <property type="family name" value="Carbohydrate-Binding Module Family 49"/>
</dbReference>
<dbReference type="CAZy" id="GH9">
    <property type="family name" value="Glycoside Hydrolase Family 9"/>
</dbReference>
<dbReference type="GlyGen" id="Q8L7I0">
    <property type="glycosylation" value="3 sites"/>
</dbReference>
<dbReference type="PaxDb" id="3702-AT4G11050.1"/>
<dbReference type="EnsemblPlants" id="AT4G11050.1">
    <property type="protein sequence ID" value="AT4G11050.1"/>
    <property type="gene ID" value="AT4G11050"/>
</dbReference>
<dbReference type="GeneID" id="826706"/>
<dbReference type="Gramene" id="AT4G11050.1">
    <property type="protein sequence ID" value="AT4G11050.1"/>
    <property type="gene ID" value="AT4G11050"/>
</dbReference>
<dbReference type="KEGG" id="ath:AT4G11050"/>
<dbReference type="Araport" id="AT4G11050"/>
<dbReference type="TAIR" id="AT4G11050">
    <property type="gene designation" value="GH9C3"/>
</dbReference>
<dbReference type="eggNOG" id="ENOG502QRF6">
    <property type="taxonomic scope" value="Eukaryota"/>
</dbReference>
<dbReference type="HOGENOM" id="CLU_008926_1_4_1"/>
<dbReference type="InParanoid" id="Q8L7I0"/>
<dbReference type="PhylomeDB" id="Q8L7I0"/>
<dbReference type="BioCyc" id="ARA:AT4G11050-MONOMER"/>
<dbReference type="PRO" id="PR:Q8L7I0"/>
<dbReference type="Proteomes" id="UP000006548">
    <property type="component" value="Chromosome 4"/>
</dbReference>
<dbReference type="ExpressionAtlas" id="Q8L7I0">
    <property type="expression patterns" value="baseline and differential"/>
</dbReference>
<dbReference type="GO" id="GO:0005576">
    <property type="term" value="C:extracellular region"/>
    <property type="evidence" value="ECO:0007669"/>
    <property type="project" value="UniProtKB-SubCell"/>
</dbReference>
<dbReference type="GO" id="GO:0030246">
    <property type="term" value="F:carbohydrate binding"/>
    <property type="evidence" value="ECO:0007669"/>
    <property type="project" value="InterPro"/>
</dbReference>
<dbReference type="GO" id="GO:0008810">
    <property type="term" value="F:cellulase activity"/>
    <property type="evidence" value="ECO:0007669"/>
    <property type="project" value="UniProtKB-EC"/>
</dbReference>
<dbReference type="GO" id="GO:0071555">
    <property type="term" value="P:cell wall organization"/>
    <property type="evidence" value="ECO:0007669"/>
    <property type="project" value="UniProtKB-KW"/>
</dbReference>
<dbReference type="GO" id="GO:0030245">
    <property type="term" value="P:cellulose catabolic process"/>
    <property type="evidence" value="ECO:0007669"/>
    <property type="project" value="UniProtKB-KW"/>
</dbReference>
<dbReference type="FunFam" id="1.50.10.10:FF:000020">
    <property type="entry name" value="Endoglucanase"/>
    <property type="match status" value="1"/>
</dbReference>
<dbReference type="Gene3D" id="1.50.10.10">
    <property type="match status" value="1"/>
</dbReference>
<dbReference type="InterPro" id="IPR008928">
    <property type="entry name" value="6-hairpin_glycosidase_sf"/>
</dbReference>
<dbReference type="InterPro" id="IPR012341">
    <property type="entry name" value="6hp_glycosidase-like_sf"/>
</dbReference>
<dbReference type="InterPro" id="IPR019028">
    <property type="entry name" value="CBM_49"/>
</dbReference>
<dbReference type="InterPro" id="IPR001701">
    <property type="entry name" value="Glyco_hydro_9"/>
</dbReference>
<dbReference type="InterPro" id="IPR033126">
    <property type="entry name" value="Glyco_hydro_9_Asp/Glu_AS"/>
</dbReference>
<dbReference type="InterPro" id="IPR018221">
    <property type="entry name" value="Glyco_hydro_9_His_AS"/>
</dbReference>
<dbReference type="PANTHER" id="PTHR22298">
    <property type="entry name" value="ENDO-1,4-BETA-GLUCANASE"/>
    <property type="match status" value="1"/>
</dbReference>
<dbReference type="Pfam" id="PF09478">
    <property type="entry name" value="CBM49"/>
    <property type="match status" value="1"/>
</dbReference>
<dbReference type="Pfam" id="PF00759">
    <property type="entry name" value="Glyco_hydro_9"/>
    <property type="match status" value="1"/>
</dbReference>
<dbReference type="SMART" id="SM01063">
    <property type="entry name" value="CBM49"/>
    <property type="match status" value="1"/>
</dbReference>
<dbReference type="SUPFAM" id="SSF48208">
    <property type="entry name" value="Six-hairpin glycosidases"/>
    <property type="match status" value="1"/>
</dbReference>
<dbReference type="PROSITE" id="PS60032">
    <property type="entry name" value="GH9_1"/>
    <property type="match status" value="1"/>
</dbReference>
<dbReference type="PROSITE" id="PS00592">
    <property type="entry name" value="GH9_2"/>
    <property type="match status" value="1"/>
</dbReference>
<dbReference type="PROSITE" id="PS00698">
    <property type="entry name" value="GH9_3"/>
    <property type="match status" value="1"/>
</dbReference>